<reference key="1">
    <citation type="journal article" date="2001" name="Nature">
        <title>Genome sequence of Yersinia pestis, the causative agent of plague.</title>
        <authorList>
            <person name="Parkhill J."/>
            <person name="Wren B.W."/>
            <person name="Thomson N.R."/>
            <person name="Titball R.W."/>
            <person name="Holden M.T.G."/>
            <person name="Prentice M.B."/>
            <person name="Sebaihia M."/>
            <person name="James K.D."/>
            <person name="Churcher C.M."/>
            <person name="Mungall K.L."/>
            <person name="Baker S."/>
            <person name="Basham D."/>
            <person name="Bentley S.D."/>
            <person name="Brooks K."/>
            <person name="Cerdeno-Tarraga A.-M."/>
            <person name="Chillingworth T."/>
            <person name="Cronin A."/>
            <person name="Davies R.M."/>
            <person name="Davis P."/>
            <person name="Dougan G."/>
            <person name="Feltwell T."/>
            <person name="Hamlin N."/>
            <person name="Holroyd S."/>
            <person name="Jagels K."/>
            <person name="Karlyshev A.V."/>
            <person name="Leather S."/>
            <person name="Moule S."/>
            <person name="Oyston P.C.F."/>
            <person name="Quail M.A."/>
            <person name="Rutherford K.M."/>
            <person name="Simmonds M."/>
            <person name="Skelton J."/>
            <person name="Stevens K."/>
            <person name="Whitehead S."/>
            <person name="Barrell B.G."/>
        </authorList>
    </citation>
    <scope>NUCLEOTIDE SEQUENCE [LARGE SCALE GENOMIC DNA]</scope>
    <source>
        <strain>CO-92 / Biovar Orientalis</strain>
    </source>
</reference>
<reference key="2">
    <citation type="journal article" date="2002" name="J. Bacteriol.">
        <title>Genome sequence of Yersinia pestis KIM.</title>
        <authorList>
            <person name="Deng W."/>
            <person name="Burland V."/>
            <person name="Plunkett G. III"/>
            <person name="Boutin A."/>
            <person name="Mayhew G.F."/>
            <person name="Liss P."/>
            <person name="Perna N.T."/>
            <person name="Rose D.J."/>
            <person name="Mau B."/>
            <person name="Zhou S."/>
            <person name="Schwartz D.C."/>
            <person name="Fetherston J.D."/>
            <person name="Lindler L.E."/>
            <person name="Brubaker R.R."/>
            <person name="Plano G.V."/>
            <person name="Straley S.C."/>
            <person name="McDonough K.A."/>
            <person name="Nilles M.L."/>
            <person name="Matson J.S."/>
            <person name="Blattner F.R."/>
            <person name="Perry R.D."/>
        </authorList>
    </citation>
    <scope>NUCLEOTIDE SEQUENCE [LARGE SCALE GENOMIC DNA]</scope>
    <source>
        <strain>KIM10+ / Biovar Mediaevalis</strain>
    </source>
</reference>
<reference key="3">
    <citation type="journal article" date="2004" name="DNA Res.">
        <title>Complete genome sequence of Yersinia pestis strain 91001, an isolate avirulent to humans.</title>
        <authorList>
            <person name="Song Y."/>
            <person name="Tong Z."/>
            <person name="Wang J."/>
            <person name="Wang L."/>
            <person name="Guo Z."/>
            <person name="Han Y."/>
            <person name="Zhang J."/>
            <person name="Pei D."/>
            <person name="Zhou D."/>
            <person name="Qin H."/>
            <person name="Pang X."/>
            <person name="Han Y."/>
            <person name="Zhai J."/>
            <person name="Li M."/>
            <person name="Cui B."/>
            <person name="Qi Z."/>
            <person name="Jin L."/>
            <person name="Dai R."/>
            <person name="Chen F."/>
            <person name="Li S."/>
            <person name="Ye C."/>
            <person name="Du Z."/>
            <person name="Lin W."/>
            <person name="Wang J."/>
            <person name="Yu J."/>
            <person name="Yang H."/>
            <person name="Wang J."/>
            <person name="Huang P."/>
            <person name="Yang R."/>
        </authorList>
    </citation>
    <scope>NUCLEOTIDE SEQUENCE [LARGE SCALE GENOMIC DNA]</scope>
    <source>
        <strain>91001 / Biovar Mediaevalis</strain>
    </source>
</reference>
<sequence length="104" mass="11347">MAAKIRRDDEVIVLTGKDKGKRGKVKNVLSSGKVIVEGINLVKKHQKPVPALNQPGGIVEKEAAIQVSNLALFNATTGKADRVGFRFEDGKKVRFFKSTSETIK</sequence>
<gene>
    <name evidence="2" type="primary">rplX</name>
    <name type="ordered locus">YPO0221</name>
    <name type="ordered locus">y4000</name>
    <name type="ordered locus">YP_0218</name>
</gene>
<keyword id="KW-1185">Reference proteome</keyword>
<keyword id="KW-0687">Ribonucleoprotein</keyword>
<keyword id="KW-0689">Ribosomal protein</keyword>
<keyword id="KW-0694">RNA-binding</keyword>
<keyword id="KW-0699">rRNA-binding</keyword>
<organism>
    <name type="scientific">Yersinia pestis</name>
    <dbReference type="NCBI Taxonomy" id="632"/>
    <lineage>
        <taxon>Bacteria</taxon>
        <taxon>Pseudomonadati</taxon>
        <taxon>Pseudomonadota</taxon>
        <taxon>Gammaproteobacteria</taxon>
        <taxon>Enterobacterales</taxon>
        <taxon>Yersiniaceae</taxon>
        <taxon>Yersinia</taxon>
    </lineage>
</organism>
<evidence type="ECO:0000250" key="1"/>
<evidence type="ECO:0000255" key="2">
    <source>
        <dbReference type="HAMAP-Rule" id="MF_01326"/>
    </source>
</evidence>
<evidence type="ECO:0000305" key="3"/>
<comment type="function">
    <text evidence="2">One of two assembly initiator proteins, it binds directly to the 5'-end of the 23S rRNA, where it nucleates assembly of the 50S subunit.</text>
</comment>
<comment type="function">
    <text evidence="2">One of the proteins that surrounds the polypeptide exit tunnel on the outside of the subunit.</text>
</comment>
<comment type="subunit">
    <text evidence="2">Part of the 50S ribosomal subunit.</text>
</comment>
<comment type="similarity">
    <text evidence="2">Belongs to the universal ribosomal protein uL24 family.</text>
</comment>
<feature type="initiator methionine" description="Removed" evidence="1">
    <location>
        <position position="1"/>
    </location>
</feature>
<feature type="chain" id="PRO_0000130758" description="Large ribosomal subunit protein uL24">
    <location>
        <begin position="2"/>
        <end position="104"/>
    </location>
</feature>
<protein>
    <recommendedName>
        <fullName evidence="2">Large ribosomal subunit protein uL24</fullName>
    </recommendedName>
    <alternativeName>
        <fullName evidence="3">50S ribosomal protein L24</fullName>
    </alternativeName>
</protein>
<dbReference type="EMBL" id="AL590842">
    <property type="protein sequence ID" value="CAL18903.1"/>
    <property type="molecule type" value="Genomic_DNA"/>
</dbReference>
<dbReference type="EMBL" id="AE009952">
    <property type="protein sequence ID" value="AAM87544.1"/>
    <property type="molecule type" value="Genomic_DNA"/>
</dbReference>
<dbReference type="EMBL" id="AE017042">
    <property type="protein sequence ID" value="AAS60494.1"/>
    <property type="molecule type" value="Genomic_DNA"/>
</dbReference>
<dbReference type="PIR" id="AE0027">
    <property type="entry name" value="AE0027"/>
</dbReference>
<dbReference type="RefSeq" id="WP_002213327.1">
    <property type="nucleotide sequence ID" value="NZ_WUCM01000078.1"/>
</dbReference>
<dbReference type="RefSeq" id="YP_002345301.1">
    <property type="nucleotide sequence ID" value="NC_003143.1"/>
</dbReference>
<dbReference type="SMR" id="Q8ZJA1"/>
<dbReference type="STRING" id="214092.YPO0221"/>
<dbReference type="PaxDb" id="214092-YPO0221"/>
<dbReference type="DNASU" id="1148947"/>
<dbReference type="EnsemblBacteria" id="AAS60494">
    <property type="protein sequence ID" value="AAS60494"/>
    <property type="gene ID" value="YP_0218"/>
</dbReference>
<dbReference type="GeneID" id="57974384"/>
<dbReference type="KEGG" id="ype:YPO0221"/>
<dbReference type="KEGG" id="ypk:y4000"/>
<dbReference type="KEGG" id="ypm:YP_0218"/>
<dbReference type="PATRIC" id="fig|214092.21.peg.449"/>
<dbReference type="eggNOG" id="COG0198">
    <property type="taxonomic scope" value="Bacteria"/>
</dbReference>
<dbReference type="HOGENOM" id="CLU_093315_2_2_6"/>
<dbReference type="OMA" id="HISNLML"/>
<dbReference type="OrthoDB" id="9807419at2"/>
<dbReference type="Proteomes" id="UP000000815">
    <property type="component" value="Chromosome"/>
</dbReference>
<dbReference type="Proteomes" id="UP000001019">
    <property type="component" value="Chromosome"/>
</dbReference>
<dbReference type="Proteomes" id="UP000002490">
    <property type="component" value="Chromosome"/>
</dbReference>
<dbReference type="GO" id="GO:0022625">
    <property type="term" value="C:cytosolic large ribosomal subunit"/>
    <property type="evidence" value="ECO:0000318"/>
    <property type="project" value="GO_Central"/>
</dbReference>
<dbReference type="GO" id="GO:0019843">
    <property type="term" value="F:rRNA binding"/>
    <property type="evidence" value="ECO:0007669"/>
    <property type="project" value="UniProtKB-UniRule"/>
</dbReference>
<dbReference type="GO" id="GO:0003735">
    <property type="term" value="F:structural constituent of ribosome"/>
    <property type="evidence" value="ECO:0007669"/>
    <property type="project" value="InterPro"/>
</dbReference>
<dbReference type="GO" id="GO:0006412">
    <property type="term" value="P:translation"/>
    <property type="evidence" value="ECO:0000318"/>
    <property type="project" value="GO_Central"/>
</dbReference>
<dbReference type="CDD" id="cd06089">
    <property type="entry name" value="KOW_RPL26"/>
    <property type="match status" value="1"/>
</dbReference>
<dbReference type="FunFam" id="2.30.30.30:FF:000004">
    <property type="entry name" value="50S ribosomal protein L24"/>
    <property type="match status" value="1"/>
</dbReference>
<dbReference type="Gene3D" id="2.30.30.30">
    <property type="match status" value="1"/>
</dbReference>
<dbReference type="HAMAP" id="MF_01326_B">
    <property type="entry name" value="Ribosomal_uL24_B"/>
    <property type="match status" value="1"/>
</dbReference>
<dbReference type="InterPro" id="IPR005824">
    <property type="entry name" value="KOW"/>
</dbReference>
<dbReference type="InterPro" id="IPR014722">
    <property type="entry name" value="Rib_uL2_dom2"/>
</dbReference>
<dbReference type="InterPro" id="IPR003256">
    <property type="entry name" value="Ribosomal_uL24"/>
</dbReference>
<dbReference type="InterPro" id="IPR005825">
    <property type="entry name" value="Ribosomal_uL24_CS"/>
</dbReference>
<dbReference type="InterPro" id="IPR041988">
    <property type="entry name" value="Ribosomal_uL24_KOW"/>
</dbReference>
<dbReference type="InterPro" id="IPR008991">
    <property type="entry name" value="Translation_prot_SH3-like_sf"/>
</dbReference>
<dbReference type="NCBIfam" id="TIGR01079">
    <property type="entry name" value="rplX_bact"/>
    <property type="match status" value="1"/>
</dbReference>
<dbReference type="PANTHER" id="PTHR12903">
    <property type="entry name" value="MITOCHONDRIAL RIBOSOMAL PROTEIN L24"/>
    <property type="match status" value="1"/>
</dbReference>
<dbReference type="Pfam" id="PF00467">
    <property type="entry name" value="KOW"/>
    <property type="match status" value="1"/>
</dbReference>
<dbReference type="Pfam" id="PF17136">
    <property type="entry name" value="ribosomal_L24"/>
    <property type="match status" value="1"/>
</dbReference>
<dbReference type="SMART" id="SM00739">
    <property type="entry name" value="KOW"/>
    <property type="match status" value="1"/>
</dbReference>
<dbReference type="SUPFAM" id="SSF50104">
    <property type="entry name" value="Translation proteins SH3-like domain"/>
    <property type="match status" value="1"/>
</dbReference>
<dbReference type="PROSITE" id="PS01108">
    <property type="entry name" value="RIBOSOMAL_L24"/>
    <property type="match status" value="1"/>
</dbReference>
<name>RL24_YERPE</name>
<proteinExistence type="inferred from homology"/>
<accession>Q8ZJA1</accession>
<accession>Q0WK87</accession>